<keyword id="KW-0963">Cytoplasm</keyword>
<keyword id="KW-0597">Phosphoprotein</keyword>
<keyword id="KW-1185">Reference proteome</keyword>
<keyword id="KW-0677">Repeat</keyword>
<keyword id="KW-0728">SH3 domain</keyword>
<keyword id="KW-0802">TPR repeat</keyword>
<comment type="function">
    <text evidence="2 3">Subunit of the phagocyte NADPH oxidase complex that mediates the transfer of electrons from cytosolic NADPH to O2 to produce the superoxide anion (O2(-)). In the activated complex, electrons are first transferred from NADPH to flavin adenine dinucleotide (FAD) and subsequently transferred via two heme molecules to molecular oxygen, producing superoxide through an outer-sphere reaction. Activation of the NADPH oxidase complex is initiated by the assembly of cytosolic subunits of the NADPH oxidase complex with the core NADPH oxidase complex to form a complex at the plasma membrane or phagosomal membrane (By similarity). This activation process is initiated by phosphorylation dependent binding of the cytosolic NCF1/p47-phox subunit to the C-terminus of CYBA/p22-phox (By similarity).</text>
</comment>
<comment type="subunit">
    <text evidence="1 3">Component of the phagocyte NADPH oxidase complex composed of an obligatory core heterodimer formed by the membrane proteins CYBA and CYBB and the cytosolic regulatory subunits NCF1/p47-phox, NCF2/p67-phox, NCF4/p40-phox and the small GTPase RAC1 or RAC2. Part of a cytosolic complex composed at least by NCF1, NCF2 and NCF4. Interacts with NCF4. Interacts (via the C-terminal SH3 domain) with NCF1 (via C-terminus). Interacts with SYTL1 and RAC1. May interact with NOXO1 (By similarity). Interacts with S100A8 and calprotectin (S100A8/9) (By similarity). Interacts with GBP7 (via GB1/RHD3-type G domain) (By similarity). Interacts with CYBB; the interaction is enhanced in the presence of GBP7 (By similarity).</text>
</comment>
<comment type="subcellular location">
    <subcellularLocation>
        <location evidence="7">Cytoplasm</location>
    </subcellularLocation>
</comment>
<comment type="domain">
    <text evidence="3">The OPR/PB1 domain mediates the association with NCF4/p40-PHOX.</text>
</comment>
<comment type="similarity">
    <text evidence="7">Belongs to the NCF2/NOXA1 family.</text>
</comment>
<dbReference type="EMBL" id="AF079303">
    <property type="protein sequence ID" value="AAC82463.1"/>
    <property type="molecule type" value="mRNA"/>
</dbReference>
<dbReference type="RefSeq" id="NP_776545.1">
    <property type="nucleotide sequence ID" value="NM_174120.2"/>
</dbReference>
<dbReference type="SMR" id="O77775"/>
<dbReference type="FunCoup" id="O77775">
    <property type="interactions" value="591"/>
</dbReference>
<dbReference type="IntAct" id="O77775">
    <property type="interactions" value="2"/>
</dbReference>
<dbReference type="STRING" id="9913.ENSBTAP00000058209"/>
<dbReference type="PaxDb" id="9913-ENSBTAP00000010525"/>
<dbReference type="PeptideAtlas" id="O77775"/>
<dbReference type="GeneID" id="281346"/>
<dbReference type="KEGG" id="bta:281346"/>
<dbReference type="CTD" id="4688"/>
<dbReference type="eggNOG" id="KOG4225">
    <property type="taxonomic scope" value="Eukaryota"/>
</dbReference>
<dbReference type="InParanoid" id="O77775"/>
<dbReference type="OrthoDB" id="9450131at2759"/>
<dbReference type="Proteomes" id="UP000009136">
    <property type="component" value="Unplaced"/>
</dbReference>
<dbReference type="GO" id="GO:0005737">
    <property type="term" value="C:cytoplasm"/>
    <property type="evidence" value="ECO:0007669"/>
    <property type="project" value="UniProtKB-SubCell"/>
</dbReference>
<dbReference type="GO" id="GO:0043020">
    <property type="term" value="C:NADPH oxidase complex"/>
    <property type="evidence" value="ECO:0007669"/>
    <property type="project" value="InterPro"/>
</dbReference>
<dbReference type="GO" id="GO:0016176">
    <property type="term" value="F:superoxide-generating NADPH oxidase activator activity"/>
    <property type="evidence" value="ECO:0000318"/>
    <property type="project" value="GO_Central"/>
</dbReference>
<dbReference type="GO" id="GO:0006909">
    <property type="term" value="P:phagocytosis"/>
    <property type="evidence" value="ECO:0007669"/>
    <property type="project" value="InterPro"/>
</dbReference>
<dbReference type="GO" id="GO:0045730">
    <property type="term" value="P:respiratory burst"/>
    <property type="evidence" value="ECO:0007669"/>
    <property type="project" value="InterPro"/>
</dbReference>
<dbReference type="GO" id="GO:0042554">
    <property type="term" value="P:superoxide anion generation"/>
    <property type="evidence" value="ECO:0000318"/>
    <property type="project" value="GO_Central"/>
</dbReference>
<dbReference type="CDD" id="cd06406">
    <property type="entry name" value="PB1_P67"/>
    <property type="match status" value="1"/>
</dbReference>
<dbReference type="CDD" id="cd12046">
    <property type="entry name" value="SH3_p67phox_C"/>
    <property type="match status" value="1"/>
</dbReference>
<dbReference type="CDD" id="cd11871">
    <property type="entry name" value="SH3_p67phox_N"/>
    <property type="match status" value="1"/>
</dbReference>
<dbReference type="FunFam" id="1.25.40.10:FF:000017">
    <property type="entry name" value="NADPH oxidase regulator NoxR"/>
    <property type="match status" value="1"/>
</dbReference>
<dbReference type="FunFam" id="2.30.30.40:FF:000096">
    <property type="entry name" value="Neutrophil cytosol factor 2"/>
    <property type="match status" value="1"/>
</dbReference>
<dbReference type="FunFam" id="3.10.20.90:FF:000141">
    <property type="entry name" value="Neutrophil cytosol factor 2"/>
    <property type="match status" value="1"/>
</dbReference>
<dbReference type="FunFam" id="2.30.30.40:FF:000260">
    <property type="entry name" value="neutrophil cytosol factor 2 isoform X1"/>
    <property type="match status" value="1"/>
</dbReference>
<dbReference type="Gene3D" id="3.10.20.90">
    <property type="entry name" value="Phosphatidylinositol 3-kinase Catalytic Subunit, Chain A, domain 1"/>
    <property type="match status" value="1"/>
</dbReference>
<dbReference type="Gene3D" id="2.30.30.40">
    <property type="entry name" value="SH3 Domains"/>
    <property type="match status" value="2"/>
</dbReference>
<dbReference type="Gene3D" id="1.25.40.10">
    <property type="entry name" value="Tetratricopeptide repeat domain"/>
    <property type="match status" value="1"/>
</dbReference>
<dbReference type="InterPro" id="IPR051864">
    <property type="entry name" value="NCF2_NOXA1"/>
</dbReference>
<dbReference type="InterPro" id="IPR034889">
    <property type="entry name" value="NCF2_SH3"/>
</dbReference>
<dbReference type="InterPro" id="IPR035546">
    <property type="entry name" value="p67phox_SH3_1"/>
</dbReference>
<dbReference type="InterPro" id="IPR053793">
    <property type="entry name" value="PB1-like"/>
</dbReference>
<dbReference type="InterPro" id="IPR000270">
    <property type="entry name" value="PB1_dom"/>
</dbReference>
<dbReference type="InterPro" id="IPR034885">
    <property type="entry name" value="PB1_P67"/>
</dbReference>
<dbReference type="InterPro" id="IPR036028">
    <property type="entry name" value="SH3-like_dom_sf"/>
</dbReference>
<dbReference type="InterPro" id="IPR001452">
    <property type="entry name" value="SH3_domain"/>
</dbReference>
<dbReference type="InterPro" id="IPR011990">
    <property type="entry name" value="TPR-like_helical_dom_sf"/>
</dbReference>
<dbReference type="InterPro" id="IPR019734">
    <property type="entry name" value="TPR_rpt"/>
</dbReference>
<dbReference type="PANTHER" id="PTHR15175:SF3">
    <property type="entry name" value="NEUTROPHIL CYTOSOL FACTOR 2"/>
    <property type="match status" value="1"/>
</dbReference>
<dbReference type="PANTHER" id="PTHR15175">
    <property type="entry name" value="NEUTROPHIL CYTOSOLIC FACTOR 2, NEUTROPHIL NADPH OXIDASE FACTOR 2"/>
    <property type="match status" value="1"/>
</dbReference>
<dbReference type="Pfam" id="PF00564">
    <property type="entry name" value="PB1"/>
    <property type="match status" value="1"/>
</dbReference>
<dbReference type="Pfam" id="PF00018">
    <property type="entry name" value="SH3_1"/>
    <property type="match status" value="2"/>
</dbReference>
<dbReference type="Pfam" id="PF00515">
    <property type="entry name" value="TPR_1"/>
    <property type="match status" value="1"/>
</dbReference>
<dbReference type="Pfam" id="PF13181">
    <property type="entry name" value="TPR_8"/>
    <property type="match status" value="1"/>
</dbReference>
<dbReference type="PRINTS" id="PR00499">
    <property type="entry name" value="P67PHOX"/>
</dbReference>
<dbReference type="PRINTS" id="PR00452">
    <property type="entry name" value="SH3DOMAIN"/>
</dbReference>
<dbReference type="SMART" id="SM00666">
    <property type="entry name" value="PB1"/>
    <property type="match status" value="1"/>
</dbReference>
<dbReference type="SMART" id="SM00326">
    <property type="entry name" value="SH3"/>
    <property type="match status" value="2"/>
</dbReference>
<dbReference type="SMART" id="SM00028">
    <property type="entry name" value="TPR"/>
    <property type="match status" value="3"/>
</dbReference>
<dbReference type="SUPFAM" id="SSF54277">
    <property type="entry name" value="CAD &amp; PB1 domains"/>
    <property type="match status" value="1"/>
</dbReference>
<dbReference type="SUPFAM" id="SSF50044">
    <property type="entry name" value="SH3-domain"/>
    <property type="match status" value="2"/>
</dbReference>
<dbReference type="SUPFAM" id="SSF48452">
    <property type="entry name" value="TPR-like"/>
    <property type="match status" value="1"/>
</dbReference>
<dbReference type="PROSITE" id="PS51745">
    <property type="entry name" value="PB1"/>
    <property type="match status" value="1"/>
</dbReference>
<dbReference type="PROSITE" id="PS50002">
    <property type="entry name" value="SH3"/>
    <property type="match status" value="2"/>
</dbReference>
<dbReference type="PROSITE" id="PS50005">
    <property type="entry name" value="TPR"/>
    <property type="match status" value="3"/>
</dbReference>
<dbReference type="PROSITE" id="PS50293">
    <property type="entry name" value="TPR_REGION"/>
    <property type="match status" value="2"/>
</dbReference>
<feature type="chain" id="PRO_0000106360" description="Neutrophil cytosol factor 2">
    <location>
        <begin position="1"/>
        <end position="527"/>
    </location>
</feature>
<feature type="repeat" description="TPR 1">
    <location>
        <begin position="37"/>
        <end position="70"/>
    </location>
</feature>
<feature type="repeat" description="TPR 2">
    <location>
        <begin position="71"/>
        <end position="104"/>
    </location>
</feature>
<feature type="repeat" description="TPR 3">
    <location>
        <begin position="121"/>
        <end position="154"/>
    </location>
</feature>
<feature type="domain" description="SH3 1" evidence="4">
    <location>
        <begin position="240"/>
        <end position="299"/>
    </location>
</feature>
<feature type="domain" description="PB1" evidence="5">
    <location>
        <begin position="352"/>
        <end position="430"/>
    </location>
</feature>
<feature type="domain" description="SH3 2" evidence="4">
    <location>
        <begin position="458"/>
        <end position="517"/>
    </location>
</feature>
<feature type="region of interest" description="Disordered" evidence="6">
    <location>
        <begin position="304"/>
        <end position="345"/>
    </location>
</feature>
<feature type="region of interest" description="Disordered" evidence="6">
    <location>
        <begin position="434"/>
        <end position="457"/>
    </location>
</feature>
<feature type="compositionally biased region" description="Basic and acidic residues" evidence="6">
    <location>
        <begin position="336"/>
        <end position="345"/>
    </location>
</feature>
<feature type="modified residue" description="Phosphothreonine" evidence="1">
    <location>
        <position position="233"/>
    </location>
</feature>
<feature type="modified residue" description="Phosphoserine" evidence="1">
    <location>
        <position position="324"/>
    </location>
</feature>
<feature type="modified residue" description="Phosphoserine" evidence="1">
    <location>
        <position position="400"/>
    </location>
</feature>
<gene>
    <name evidence="3" type="primary">NCF2</name>
</gene>
<name>NCF2_BOVIN</name>
<proteinExistence type="evidence at transcript level"/>
<protein>
    <recommendedName>
        <fullName evidence="3">Neutrophil cytosol factor 2</fullName>
        <shortName>NCF-2</shortName>
    </recommendedName>
    <alternativeName>
        <fullName>67 kDa neutrophil oxidase factor</fullName>
    </alternativeName>
    <alternativeName>
        <fullName>Neutrophil NADPH oxidase factor 2</fullName>
    </alternativeName>
    <alternativeName>
        <fullName>p67-phox</fullName>
    </alternativeName>
</protein>
<reference key="1">
    <citation type="journal article" date="2000" name="J. Leukoc. Biol.">
        <title>Cloning and expression of bovine p47-phox and p67-phox: comparison with the human and murine homologs.</title>
        <authorList>
            <person name="Bunger P.L."/>
            <person name="Swain S.D."/>
            <person name="Clements M.K."/>
            <person name="Siemsen D.W."/>
            <person name="Davis A.R."/>
            <person name="Gauss K.A."/>
            <person name="Quinn M.T."/>
        </authorList>
    </citation>
    <scope>NUCLEOTIDE SEQUENCE [MRNA]</scope>
</reference>
<organism>
    <name type="scientific">Bos taurus</name>
    <name type="common">Bovine</name>
    <dbReference type="NCBI Taxonomy" id="9913"/>
    <lineage>
        <taxon>Eukaryota</taxon>
        <taxon>Metazoa</taxon>
        <taxon>Chordata</taxon>
        <taxon>Craniata</taxon>
        <taxon>Vertebrata</taxon>
        <taxon>Euteleostomi</taxon>
        <taxon>Mammalia</taxon>
        <taxon>Eutheria</taxon>
        <taxon>Laurasiatheria</taxon>
        <taxon>Artiodactyla</taxon>
        <taxon>Ruminantia</taxon>
        <taxon>Pecora</taxon>
        <taxon>Bovidae</taxon>
        <taxon>Bovinae</taxon>
        <taxon>Bos</taxon>
    </lineage>
</organism>
<evidence type="ECO:0000250" key="1">
    <source>
        <dbReference type="UniProtKB" id="O70145"/>
    </source>
</evidence>
<evidence type="ECO:0000250" key="2">
    <source>
        <dbReference type="UniProtKB" id="P14598"/>
    </source>
</evidence>
<evidence type="ECO:0000250" key="3">
    <source>
        <dbReference type="UniProtKB" id="P19878"/>
    </source>
</evidence>
<evidence type="ECO:0000255" key="4">
    <source>
        <dbReference type="PROSITE-ProRule" id="PRU00192"/>
    </source>
</evidence>
<evidence type="ECO:0000255" key="5">
    <source>
        <dbReference type="PROSITE-ProRule" id="PRU01081"/>
    </source>
</evidence>
<evidence type="ECO:0000256" key="6">
    <source>
        <dbReference type="SAM" id="MobiDB-lite"/>
    </source>
</evidence>
<evidence type="ECO:0000305" key="7"/>
<accession>O77775</accession>
<sequence length="527" mass="59663">MSLAEAISLWNEGVLAADKKDWKGALDAFTGVQDPHSRICFNVGCIYTILGNLPEAEKAFTKSINRDKHLAVSYFQRGMLYYQMEKYDSAIKDLKEALTQLRGNQLIDYKILGLQFKLFACEVLYNIAFMYAKREEWKKAEEHLALAVSMKSEPRHSKIDRAMESVWKQKLYEPVVIPVGRLFRPNEKQVAQLVKKDYLGKATVVASVVDQDSFSGFAPLQPQAAEPPPRPKTPEIFRALEGEAHRVLFGFVPETPEELQVMPGNIVFVLKKGNDNWATVMFNGQKGLVPCNYLEPVELRIHPQQQPQEETSLESDIPAPPSSSAPGRPQLSPGQKGKEEPKQEIKLSVPKSYTLKVHYKYTVVMETQFRLPYSQVRDMVAKKLDLLPEHTKLSYRRQDSNELVPLSEFSMKDAWAQVKNYCLTLWCENTVGDQGFPDEPEESKKSDANNQTTEPELKEGSKVVALFSYEATQPEDLEFLEGDVILVISTVNEQWLEGECKGKVGIFPKAFVEQHPTTDLESTPGRV</sequence>